<proteinExistence type="evidence at protein level"/>
<accession>A0R638</accession>
<accession>I7GFR4</accession>
<comment type="function">
    <text evidence="1">Catalyzes the attachment of serine to tRNA(Ser). Is also able to aminoacylate tRNA(Sec) with serine, to form the misacylated tRNA L-seryl-tRNA(Sec), which will be further converted into selenocysteinyl-tRNA(Sec).</text>
</comment>
<comment type="catalytic activity">
    <reaction evidence="1">
        <text>tRNA(Ser) + L-serine + ATP = L-seryl-tRNA(Ser) + AMP + diphosphate + H(+)</text>
        <dbReference type="Rhea" id="RHEA:12292"/>
        <dbReference type="Rhea" id="RHEA-COMP:9669"/>
        <dbReference type="Rhea" id="RHEA-COMP:9703"/>
        <dbReference type="ChEBI" id="CHEBI:15378"/>
        <dbReference type="ChEBI" id="CHEBI:30616"/>
        <dbReference type="ChEBI" id="CHEBI:33019"/>
        <dbReference type="ChEBI" id="CHEBI:33384"/>
        <dbReference type="ChEBI" id="CHEBI:78442"/>
        <dbReference type="ChEBI" id="CHEBI:78533"/>
        <dbReference type="ChEBI" id="CHEBI:456215"/>
        <dbReference type="EC" id="6.1.1.11"/>
    </reaction>
</comment>
<comment type="catalytic activity">
    <reaction evidence="1">
        <text>tRNA(Sec) + L-serine + ATP = L-seryl-tRNA(Sec) + AMP + diphosphate + H(+)</text>
        <dbReference type="Rhea" id="RHEA:42580"/>
        <dbReference type="Rhea" id="RHEA-COMP:9742"/>
        <dbReference type="Rhea" id="RHEA-COMP:10128"/>
        <dbReference type="ChEBI" id="CHEBI:15378"/>
        <dbReference type="ChEBI" id="CHEBI:30616"/>
        <dbReference type="ChEBI" id="CHEBI:33019"/>
        <dbReference type="ChEBI" id="CHEBI:33384"/>
        <dbReference type="ChEBI" id="CHEBI:78442"/>
        <dbReference type="ChEBI" id="CHEBI:78533"/>
        <dbReference type="ChEBI" id="CHEBI:456215"/>
        <dbReference type="EC" id="6.1.1.11"/>
    </reaction>
</comment>
<comment type="pathway">
    <text evidence="1">Aminoacyl-tRNA biosynthesis; selenocysteinyl-tRNA(Sec) biosynthesis; L-seryl-tRNA(Sec) from L-serine and tRNA(Sec): step 1/1.</text>
</comment>
<comment type="subunit">
    <text evidence="1">Homodimer. The tRNA molecule binds across the dimer.</text>
</comment>
<comment type="subcellular location">
    <subcellularLocation>
        <location evidence="1">Cytoplasm</location>
    </subcellularLocation>
</comment>
<comment type="domain">
    <text evidence="1">Consists of two distinct domains, a catalytic core and a N-terminal extension that is involved in tRNA binding.</text>
</comment>
<comment type="similarity">
    <text evidence="1">Belongs to the class-II aminoacyl-tRNA synthetase family. Type-1 seryl-tRNA synthetase subfamily.</text>
</comment>
<protein>
    <recommendedName>
        <fullName evidence="1">Serine--tRNA ligase</fullName>
        <ecNumber evidence="1">6.1.1.11</ecNumber>
    </recommendedName>
    <alternativeName>
        <fullName evidence="1">Seryl-tRNA synthetase</fullName>
        <shortName evidence="1">SerRS</shortName>
    </alternativeName>
    <alternativeName>
        <fullName evidence="1">Seryl-tRNA(Ser/Sec) synthetase</fullName>
    </alternativeName>
</protein>
<reference key="1">
    <citation type="submission" date="2006-10" db="EMBL/GenBank/DDBJ databases">
        <authorList>
            <person name="Fleischmann R.D."/>
            <person name="Dodson R.J."/>
            <person name="Haft D.H."/>
            <person name="Merkel J.S."/>
            <person name="Nelson W.C."/>
            <person name="Fraser C.M."/>
        </authorList>
    </citation>
    <scope>NUCLEOTIDE SEQUENCE [LARGE SCALE GENOMIC DNA]</scope>
    <source>
        <strain>ATCC 700084 / mc(2)155</strain>
    </source>
</reference>
<reference key="2">
    <citation type="journal article" date="2007" name="Genome Biol.">
        <title>Interrupted coding sequences in Mycobacterium smegmatis: authentic mutations or sequencing errors?</title>
        <authorList>
            <person name="Deshayes C."/>
            <person name="Perrodou E."/>
            <person name="Gallien S."/>
            <person name="Euphrasie D."/>
            <person name="Schaeffer C."/>
            <person name="Van-Dorsselaer A."/>
            <person name="Poch O."/>
            <person name="Lecompte O."/>
            <person name="Reyrat J.-M."/>
        </authorList>
    </citation>
    <scope>NUCLEOTIDE SEQUENCE [LARGE SCALE GENOMIC DNA]</scope>
    <source>
        <strain>ATCC 700084 / mc(2)155</strain>
    </source>
</reference>
<reference key="3">
    <citation type="journal article" date="2009" name="Genome Res.">
        <title>Ortho-proteogenomics: multiple proteomes investigation through orthology and a new MS-based protocol.</title>
        <authorList>
            <person name="Gallien S."/>
            <person name="Perrodou E."/>
            <person name="Carapito C."/>
            <person name="Deshayes C."/>
            <person name="Reyrat J.-M."/>
            <person name="Van Dorsselaer A."/>
            <person name="Poch O."/>
            <person name="Schaeffer C."/>
            <person name="Lecompte O."/>
        </authorList>
    </citation>
    <scope>NUCLEOTIDE SEQUENCE [LARGE SCALE GENOMIC DNA]</scope>
    <scope>IDENTIFICATION BY MASS SPECTROMETRY [LARGE SCALE ANALYSIS]</scope>
    <source>
        <strain>ATCC 700084 / mc(2)155</strain>
    </source>
</reference>
<name>SYS_MYCS2</name>
<keyword id="KW-0030">Aminoacyl-tRNA synthetase</keyword>
<keyword id="KW-0067">ATP-binding</keyword>
<keyword id="KW-0963">Cytoplasm</keyword>
<keyword id="KW-0436">Ligase</keyword>
<keyword id="KW-0547">Nucleotide-binding</keyword>
<keyword id="KW-0648">Protein biosynthesis</keyword>
<keyword id="KW-1185">Reference proteome</keyword>
<evidence type="ECO:0000255" key="1">
    <source>
        <dbReference type="HAMAP-Rule" id="MF_00176"/>
    </source>
</evidence>
<organism>
    <name type="scientific">Mycolicibacterium smegmatis (strain ATCC 700084 / mc(2)155)</name>
    <name type="common">Mycobacterium smegmatis</name>
    <dbReference type="NCBI Taxonomy" id="246196"/>
    <lineage>
        <taxon>Bacteria</taxon>
        <taxon>Bacillati</taxon>
        <taxon>Actinomycetota</taxon>
        <taxon>Actinomycetes</taxon>
        <taxon>Mycobacteriales</taxon>
        <taxon>Mycobacteriaceae</taxon>
        <taxon>Mycolicibacterium</taxon>
    </lineage>
</organism>
<feature type="chain" id="PRO_1000019738" description="Serine--tRNA ligase">
    <location>
        <begin position="1"/>
        <end position="417"/>
    </location>
</feature>
<feature type="binding site" evidence="1">
    <location>
        <begin position="226"/>
        <end position="228"/>
    </location>
    <ligand>
        <name>L-serine</name>
        <dbReference type="ChEBI" id="CHEBI:33384"/>
    </ligand>
</feature>
<feature type="binding site" evidence="1">
    <location>
        <begin position="257"/>
        <end position="259"/>
    </location>
    <ligand>
        <name>ATP</name>
        <dbReference type="ChEBI" id="CHEBI:30616"/>
    </ligand>
</feature>
<feature type="binding site" evidence="1">
    <location>
        <position position="273"/>
    </location>
    <ligand>
        <name>ATP</name>
        <dbReference type="ChEBI" id="CHEBI:30616"/>
    </ligand>
</feature>
<feature type="binding site" evidence="1">
    <location>
        <position position="280"/>
    </location>
    <ligand>
        <name>L-serine</name>
        <dbReference type="ChEBI" id="CHEBI:33384"/>
    </ligand>
</feature>
<feature type="binding site" evidence="1">
    <location>
        <begin position="344"/>
        <end position="347"/>
    </location>
    <ligand>
        <name>ATP</name>
        <dbReference type="ChEBI" id="CHEBI:30616"/>
    </ligand>
</feature>
<feature type="binding site" evidence="1">
    <location>
        <position position="379"/>
    </location>
    <ligand>
        <name>L-serine</name>
        <dbReference type="ChEBI" id="CHEBI:33384"/>
    </ligand>
</feature>
<gene>
    <name evidence="1" type="primary">serS</name>
    <name type="ordered locus">MSMEG_6413</name>
    <name type="ordered locus">MSMEI_6245</name>
</gene>
<dbReference type="EC" id="6.1.1.11" evidence="1"/>
<dbReference type="EMBL" id="CP000480">
    <property type="protein sequence ID" value="ABK71764.1"/>
    <property type="molecule type" value="Genomic_DNA"/>
</dbReference>
<dbReference type="EMBL" id="CP001663">
    <property type="protein sequence ID" value="AFP42671.1"/>
    <property type="molecule type" value="Genomic_DNA"/>
</dbReference>
<dbReference type="RefSeq" id="WP_003897822.1">
    <property type="nucleotide sequence ID" value="NZ_SIJM01000013.1"/>
</dbReference>
<dbReference type="RefSeq" id="YP_890626.1">
    <property type="nucleotide sequence ID" value="NC_008596.1"/>
</dbReference>
<dbReference type="SMR" id="A0R638"/>
<dbReference type="STRING" id="246196.MSMEG_6413"/>
<dbReference type="PaxDb" id="246196-MSMEI_6245"/>
<dbReference type="GeneID" id="93461025"/>
<dbReference type="KEGG" id="msb:LJ00_31700"/>
<dbReference type="KEGG" id="msg:MSMEI_6245"/>
<dbReference type="KEGG" id="msm:MSMEG_6413"/>
<dbReference type="PATRIC" id="fig|246196.19.peg.6239"/>
<dbReference type="eggNOG" id="COG0172">
    <property type="taxonomic scope" value="Bacteria"/>
</dbReference>
<dbReference type="OrthoDB" id="9804647at2"/>
<dbReference type="UniPathway" id="UPA00906">
    <property type="reaction ID" value="UER00895"/>
</dbReference>
<dbReference type="Proteomes" id="UP000000757">
    <property type="component" value="Chromosome"/>
</dbReference>
<dbReference type="Proteomes" id="UP000006158">
    <property type="component" value="Chromosome"/>
</dbReference>
<dbReference type="GO" id="GO:0005737">
    <property type="term" value="C:cytoplasm"/>
    <property type="evidence" value="ECO:0007669"/>
    <property type="project" value="UniProtKB-SubCell"/>
</dbReference>
<dbReference type="GO" id="GO:0005524">
    <property type="term" value="F:ATP binding"/>
    <property type="evidence" value="ECO:0007669"/>
    <property type="project" value="UniProtKB-UniRule"/>
</dbReference>
<dbReference type="GO" id="GO:0004828">
    <property type="term" value="F:serine-tRNA ligase activity"/>
    <property type="evidence" value="ECO:0007669"/>
    <property type="project" value="UniProtKB-UniRule"/>
</dbReference>
<dbReference type="GO" id="GO:0016260">
    <property type="term" value="P:selenocysteine biosynthetic process"/>
    <property type="evidence" value="ECO:0007669"/>
    <property type="project" value="UniProtKB-UniRule"/>
</dbReference>
<dbReference type="GO" id="GO:0006434">
    <property type="term" value="P:seryl-tRNA aminoacylation"/>
    <property type="evidence" value="ECO:0007669"/>
    <property type="project" value="UniProtKB-UniRule"/>
</dbReference>
<dbReference type="CDD" id="cd00770">
    <property type="entry name" value="SerRS_core"/>
    <property type="match status" value="1"/>
</dbReference>
<dbReference type="FunFam" id="1.10.287.40:FF:000004">
    <property type="entry name" value="Serine--tRNA ligase"/>
    <property type="match status" value="1"/>
</dbReference>
<dbReference type="FunFam" id="3.30.930.10:FF:000048">
    <property type="entry name" value="Serine--tRNA ligase"/>
    <property type="match status" value="1"/>
</dbReference>
<dbReference type="Gene3D" id="3.30.930.10">
    <property type="entry name" value="Bira Bifunctional Protein, Domain 2"/>
    <property type="match status" value="1"/>
</dbReference>
<dbReference type="Gene3D" id="1.10.287.40">
    <property type="entry name" value="Serine-tRNA synthetase, tRNA binding domain"/>
    <property type="match status" value="1"/>
</dbReference>
<dbReference type="HAMAP" id="MF_00176">
    <property type="entry name" value="Ser_tRNA_synth_type1"/>
    <property type="match status" value="1"/>
</dbReference>
<dbReference type="InterPro" id="IPR002314">
    <property type="entry name" value="aa-tRNA-synt_IIb"/>
</dbReference>
<dbReference type="InterPro" id="IPR006195">
    <property type="entry name" value="aa-tRNA-synth_II"/>
</dbReference>
<dbReference type="InterPro" id="IPR045864">
    <property type="entry name" value="aa-tRNA-synth_II/BPL/LPL"/>
</dbReference>
<dbReference type="InterPro" id="IPR002317">
    <property type="entry name" value="Ser-tRNA-ligase_type_1"/>
</dbReference>
<dbReference type="InterPro" id="IPR015866">
    <property type="entry name" value="Ser-tRNA-synth_1_N"/>
</dbReference>
<dbReference type="InterPro" id="IPR042103">
    <property type="entry name" value="SerRS_1_N_sf"/>
</dbReference>
<dbReference type="InterPro" id="IPR033729">
    <property type="entry name" value="SerRS_core"/>
</dbReference>
<dbReference type="InterPro" id="IPR010978">
    <property type="entry name" value="tRNA-bd_arm"/>
</dbReference>
<dbReference type="NCBIfam" id="TIGR00414">
    <property type="entry name" value="serS"/>
    <property type="match status" value="1"/>
</dbReference>
<dbReference type="PANTHER" id="PTHR11778">
    <property type="entry name" value="SERYL-TRNA SYNTHETASE"/>
    <property type="match status" value="1"/>
</dbReference>
<dbReference type="Pfam" id="PF02403">
    <property type="entry name" value="Seryl_tRNA_N"/>
    <property type="match status" value="1"/>
</dbReference>
<dbReference type="Pfam" id="PF00587">
    <property type="entry name" value="tRNA-synt_2b"/>
    <property type="match status" value="1"/>
</dbReference>
<dbReference type="PIRSF" id="PIRSF001529">
    <property type="entry name" value="Ser-tRNA-synth_IIa"/>
    <property type="match status" value="1"/>
</dbReference>
<dbReference type="PRINTS" id="PR00981">
    <property type="entry name" value="TRNASYNTHSER"/>
</dbReference>
<dbReference type="SUPFAM" id="SSF55681">
    <property type="entry name" value="Class II aaRS and biotin synthetases"/>
    <property type="match status" value="1"/>
</dbReference>
<dbReference type="SUPFAM" id="SSF46589">
    <property type="entry name" value="tRNA-binding arm"/>
    <property type="match status" value="1"/>
</dbReference>
<dbReference type="PROSITE" id="PS50862">
    <property type="entry name" value="AA_TRNA_LIGASE_II"/>
    <property type="match status" value="1"/>
</dbReference>
<sequence>MIDLRLLRENPDIVRASQRARGEDPALVDALLAADTARRSAVSAADNLRAEQKAASKLVGKASPDERPALLQRAKDLAEQVKAAEAAQAEAEQAFTAAHMAISNVIFEGVPAGGEDDFVVLDTVGEPRAIENPKDHLELGESLGLIDMERGAKVSGSRFYFLTGAGALLQLGLLQLATQVAVQNGFTLMIPPVLVRPEVMRGTGFLGAHADEVYRLEADDMYLVGTSEVPLAGYHADEILDLSAGPRRYAGWSSCFRREAGSYGKDTRGIIRVHQFDKVEGFIYCKPEDAEAEHQRLLGWQREMLAAIEVPYRVIDVAAGDLGSSAARKYDCEAWVPTQQTYRELTSTSNCTTFQARRLSTRYRDDNGKPQIAATLNGTLATTRWLVAILENHQQPDGSVRVPAALVPYVRTEVLEP</sequence>